<name>ETF2_VACCA</name>
<feature type="chain" id="PRO_0000099079" description="Early transcription factor 82 kDa subunit">
    <location>
        <begin position="1"/>
        <end position="710"/>
    </location>
</feature>
<evidence type="ECO:0000250" key="1"/>
<evidence type="ECO:0000250" key="2">
    <source>
        <dbReference type="UniProtKB" id="P20636"/>
    </source>
</evidence>
<evidence type="ECO:0000305" key="3"/>
<organism>
    <name type="scientific">Vaccinia virus (strain Ankara)</name>
    <name type="common">VACV</name>
    <dbReference type="NCBI Taxonomy" id="126794"/>
    <lineage>
        <taxon>Viruses</taxon>
        <taxon>Varidnaviria</taxon>
        <taxon>Bamfordvirae</taxon>
        <taxon>Nucleocytoviricota</taxon>
        <taxon>Pokkesviricetes</taxon>
        <taxon>Chitovirales</taxon>
        <taxon>Poxviridae</taxon>
        <taxon>Chordopoxvirinae</taxon>
        <taxon>Orthopoxvirus</taxon>
        <taxon>Vaccinia virus</taxon>
    </lineage>
</organism>
<organismHost>
    <name type="scientific">Homo sapiens</name>
    <name type="common">Human</name>
    <dbReference type="NCBI Taxonomy" id="9606"/>
</organismHost>
<sequence length="710" mass="82331">MRYIVSPQLVLQVGKGQEVERALYLTPYDYIDEKSPIYYFLRSHLNIQQPEIVKRHILLTLRMTQLKGYLGNLLDIKDDIIIYSHKNNLEYSYVDNTIFNPFVYTQKKTLLKNDSFLYNVYPGACDFLVIWVARACDTSIPEFGSYEDVDNNIIKFETMLMEVFPQLDLDITVESKFNNIFRTNLKLTGLKKIIQRVQDLDINYKSLLSRYDEHFINMTGNHFILNDEQLNLSIWDLDGTLALSSDGDTVMINNVKLFTDLVSDIDTQMERIKGDITYKVHLATPINSRIKLDIETSFIFIETATNNILLSSDKKISIILAKNHISIKVKNHIPNIEKYFTFLVIAINAMFNSVQKSADFTKVETVYWSRICQNTKNKNRKPIIINYLDPGMKKISNNFYRSDEKEVFINDNGIMFTCMDPLGKYNKVGFLNIFHDMWKYCIPCCFLHDQSHRSTFSSCVHQIDVEKKIVSPYILNFGKVVTESKMSFLPIIFDAFLNDGMTANMEQDNKRLKETSGYHIVRCCAGDDIVRLRTTSDIIQFVNEDKNILIVNDMVYFPMNASDIGKKIHILIQEIVHEVMIVKKKESSDKIDFFPPNYKLLKDLFPKQTIQTPIQSDAGMVLTTDGFYIDGKLFNEDLSSKYVTFTKNVIASDAVAKYFSPLFKYVISEAKDRFIKTWMINIMIHMNVDPNNIIPTLEKYYPNSGRAQIN</sequence>
<comment type="function">
    <text evidence="2">Acts with RNA polymerase to initiate transcription from early gene promoters. Is recruited by the RPO-associated protein of 94 kDa RAP94/OPG109 to form the early transcription complex, which also contains the core RNA polymerase. ETF heterodimer binds to early gene promoters.</text>
</comment>
<comment type="subunit">
    <text evidence="2">Heterodimer of a 70 kDa and a 82 kDa subunit. Part of the early transcription complex composed of ETF, RAP94/OPG109, and the DNA-directed RNA polymerase.</text>
</comment>
<comment type="subcellular location">
    <subcellularLocation>
        <location evidence="2">Virion</location>
    </subcellularLocation>
    <text evidence="1">All the enzymes and other proteins required to synthesize early mRNAs are packaged within the virion core along with the DNA genome. This is necessary because viral early mRNAs are synthesized within minutes after virus entry into the cell and are extruded through pores in the core particle (By similarity).</text>
</comment>
<comment type="similarity">
    <text evidence="3">Belongs to the poxviridae VETF large subunit family.</text>
</comment>
<accession>O57220</accession>
<accession>Q6J3B2</accession>
<gene>
    <name type="primary">OPG133</name>
    <name type="synonym">VETFL</name>
    <name type="ordered locus">MVA118L</name>
    <name type="ordered locus">ACAM3000_MVA_118</name>
</gene>
<keyword id="KW-0010">Activator</keyword>
<keyword id="KW-0238">DNA-binding</keyword>
<keyword id="KW-0426">Late protein</keyword>
<keyword id="KW-0804">Transcription</keyword>
<keyword id="KW-0805">Transcription regulation</keyword>
<keyword id="KW-0946">Virion</keyword>
<proteinExistence type="inferred from homology"/>
<dbReference type="EMBL" id="U94848">
    <property type="protein sequence ID" value="AAB96460.1"/>
    <property type="molecule type" value="Genomic_DNA"/>
</dbReference>
<dbReference type="EMBL" id="AY603355">
    <property type="protein sequence ID" value="AAT10516.1"/>
    <property type="molecule type" value="Genomic_DNA"/>
</dbReference>
<dbReference type="PIR" id="T37394">
    <property type="entry name" value="T37394"/>
</dbReference>
<dbReference type="SMR" id="O57220"/>
<dbReference type="Proteomes" id="UP000159908">
    <property type="component" value="Segment"/>
</dbReference>
<dbReference type="Proteomes" id="UP000172909">
    <property type="component" value="Segment"/>
</dbReference>
<dbReference type="GO" id="GO:0044423">
    <property type="term" value="C:virion component"/>
    <property type="evidence" value="ECO:0007669"/>
    <property type="project" value="UniProtKB-KW"/>
</dbReference>
<dbReference type="GO" id="GO:0003677">
    <property type="term" value="F:DNA binding"/>
    <property type="evidence" value="ECO:0007669"/>
    <property type="project" value="UniProtKB-KW"/>
</dbReference>
<dbReference type="GO" id="GO:0045893">
    <property type="term" value="P:positive regulation of DNA-templated transcription"/>
    <property type="evidence" value="ECO:0007669"/>
    <property type="project" value="InterPro"/>
</dbReference>
<dbReference type="InterPro" id="IPR007532">
    <property type="entry name" value="Poxvirus_early-TF_lsu"/>
</dbReference>
<dbReference type="Pfam" id="PF04441">
    <property type="entry name" value="Pox_VERT_large"/>
    <property type="match status" value="1"/>
</dbReference>
<protein>
    <recommendedName>
        <fullName>Early transcription factor 82 kDa subunit</fullName>
    </recommendedName>
    <alternativeName>
        <fullName>ETF large subunit</fullName>
    </alternativeName>
    <alternativeName>
        <fullName>VETF A7 subunit</fullName>
    </alternativeName>
    <alternativeName>
        <fullName>Vaccinia virus early transcription factor large subunit</fullName>
        <shortName>VETF large subunit</shortName>
    </alternativeName>
</protein>
<reference key="1">
    <citation type="journal article" date="1998" name="Virology">
        <title>The complete genomic sequence of the modified vaccinia Ankara strain: comparison with other orthopoxviruses.</title>
        <authorList>
            <person name="Antoine G."/>
            <person name="Scheiflinger F."/>
            <person name="Dorner F."/>
            <person name="Falkner F.G."/>
        </authorList>
    </citation>
    <scope>NUCLEOTIDE SEQUENCE [LARGE SCALE GENOMIC DNA]</scope>
</reference>
<reference key="2">
    <citation type="submission" date="2004-04" db="EMBL/GenBank/DDBJ databases">
        <authorList>
            <person name="Esposito J.J."/>
            <person name="Frace M."/>
            <person name="Sammons S.A."/>
            <person name="Olsen-Rasmussen M.S."/>
            <person name="Osborne J."/>
            <person name="Khristova M."/>
            <person name="Wohlhueter R.M."/>
        </authorList>
    </citation>
    <scope>NUCLEOTIDE SEQUENCE [LARGE SCALE GENOMIC DNA]</scope>
    <source>
        <strain>Isolate Acambis 3000</strain>
    </source>
</reference>